<organism>
    <name type="scientific">Paraburkholderia xenovorans (strain LB400)</name>
    <dbReference type="NCBI Taxonomy" id="266265"/>
    <lineage>
        <taxon>Bacteria</taxon>
        <taxon>Pseudomonadati</taxon>
        <taxon>Pseudomonadota</taxon>
        <taxon>Betaproteobacteria</taxon>
        <taxon>Burkholderiales</taxon>
        <taxon>Burkholderiaceae</taxon>
        <taxon>Paraburkholderia</taxon>
    </lineage>
</organism>
<proteinExistence type="inferred from homology"/>
<feature type="chain" id="PRO_0000250292" description="Glycerol-3-phosphate acyltransferase">
    <location>
        <begin position="1"/>
        <end position="214"/>
    </location>
</feature>
<feature type="transmembrane region" description="Helical" evidence="1">
    <location>
        <begin position="4"/>
        <end position="24"/>
    </location>
</feature>
<feature type="transmembrane region" description="Helical" evidence="1">
    <location>
        <begin position="52"/>
        <end position="72"/>
    </location>
</feature>
<feature type="transmembrane region" description="Helical" evidence="1">
    <location>
        <begin position="82"/>
        <end position="102"/>
    </location>
</feature>
<feature type="transmembrane region" description="Helical" evidence="1">
    <location>
        <begin position="118"/>
        <end position="138"/>
    </location>
</feature>
<feature type="transmembrane region" description="Helical" evidence="1">
    <location>
        <begin position="159"/>
        <end position="179"/>
    </location>
</feature>
<name>PLSY_PARXL</name>
<dbReference type="EC" id="2.3.1.275" evidence="1"/>
<dbReference type="EMBL" id="CP000270">
    <property type="protein sequence ID" value="ABE32181.1"/>
    <property type="molecule type" value="Genomic_DNA"/>
</dbReference>
<dbReference type="RefSeq" id="WP_011489678.1">
    <property type="nucleotide sequence ID" value="NC_007951.1"/>
</dbReference>
<dbReference type="SMR" id="Q13UQ8"/>
<dbReference type="STRING" id="266265.Bxe_A0753"/>
<dbReference type="KEGG" id="bxb:DR64_2921"/>
<dbReference type="KEGG" id="bxe:Bxe_A0753"/>
<dbReference type="PATRIC" id="fig|266265.5.peg.3839"/>
<dbReference type="eggNOG" id="COG0344">
    <property type="taxonomic scope" value="Bacteria"/>
</dbReference>
<dbReference type="OrthoDB" id="9777124at2"/>
<dbReference type="UniPathway" id="UPA00085"/>
<dbReference type="Proteomes" id="UP000001817">
    <property type="component" value="Chromosome 1"/>
</dbReference>
<dbReference type="GO" id="GO:0005886">
    <property type="term" value="C:plasma membrane"/>
    <property type="evidence" value="ECO:0007669"/>
    <property type="project" value="UniProtKB-SubCell"/>
</dbReference>
<dbReference type="GO" id="GO:0043772">
    <property type="term" value="F:acyl-phosphate glycerol-3-phosphate acyltransferase activity"/>
    <property type="evidence" value="ECO:0007669"/>
    <property type="project" value="UniProtKB-UniRule"/>
</dbReference>
<dbReference type="GO" id="GO:0008654">
    <property type="term" value="P:phospholipid biosynthetic process"/>
    <property type="evidence" value="ECO:0007669"/>
    <property type="project" value="UniProtKB-UniRule"/>
</dbReference>
<dbReference type="HAMAP" id="MF_01043">
    <property type="entry name" value="PlsY"/>
    <property type="match status" value="1"/>
</dbReference>
<dbReference type="InterPro" id="IPR003811">
    <property type="entry name" value="G3P_acylTferase_PlsY"/>
</dbReference>
<dbReference type="NCBIfam" id="TIGR00023">
    <property type="entry name" value="glycerol-3-phosphate 1-O-acyltransferase PlsY"/>
    <property type="match status" value="1"/>
</dbReference>
<dbReference type="PANTHER" id="PTHR30309:SF0">
    <property type="entry name" value="GLYCEROL-3-PHOSPHATE ACYLTRANSFERASE-RELATED"/>
    <property type="match status" value="1"/>
</dbReference>
<dbReference type="PANTHER" id="PTHR30309">
    <property type="entry name" value="INNER MEMBRANE PROTEIN YGIH"/>
    <property type="match status" value="1"/>
</dbReference>
<dbReference type="Pfam" id="PF02660">
    <property type="entry name" value="G3P_acyltransf"/>
    <property type="match status" value="1"/>
</dbReference>
<dbReference type="SMART" id="SM01207">
    <property type="entry name" value="G3P_acyltransf"/>
    <property type="match status" value="1"/>
</dbReference>
<reference key="1">
    <citation type="journal article" date="2006" name="Proc. Natl. Acad. Sci. U.S.A.">
        <title>Burkholderia xenovorans LB400 harbors a multi-replicon, 9.73-Mbp genome shaped for versatility.</title>
        <authorList>
            <person name="Chain P.S.G."/>
            <person name="Denef V.J."/>
            <person name="Konstantinidis K.T."/>
            <person name="Vergez L.M."/>
            <person name="Agullo L."/>
            <person name="Reyes V.L."/>
            <person name="Hauser L."/>
            <person name="Cordova M."/>
            <person name="Gomez L."/>
            <person name="Gonzalez M."/>
            <person name="Land M."/>
            <person name="Lao V."/>
            <person name="Larimer F."/>
            <person name="LiPuma J.J."/>
            <person name="Mahenthiralingam E."/>
            <person name="Malfatti S.A."/>
            <person name="Marx C.J."/>
            <person name="Parnell J.J."/>
            <person name="Ramette A."/>
            <person name="Richardson P."/>
            <person name="Seeger M."/>
            <person name="Smith D."/>
            <person name="Spilker T."/>
            <person name="Sul W.J."/>
            <person name="Tsoi T.V."/>
            <person name="Ulrich L.E."/>
            <person name="Zhulin I.B."/>
            <person name="Tiedje J.M."/>
        </authorList>
    </citation>
    <scope>NUCLEOTIDE SEQUENCE [LARGE SCALE GENOMIC DNA]</scope>
    <source>
        <strain>LB400</strain>
    </source>
</reference>
<accession>Q13UQ8</accession>
<comment type="function">
    <text evidence="1">Catalyzes the transfer of an acyl group from acyl-phosphate (acyl-PO(4)) to glycerol-3-phosphate (G3P) to form lysophosphatidic acid (LPA). This enzyme utilizes acyl-phosphate as fatty acyl donor, but not acyl-CoA or acyl-ACP.</text>
</comment>
<comment type="catalytic activity">
    <reaction evidence="1">
        <text>an acyl phosphate + sn-glycerol 3-phosphate = a 1-acyl-sn-glycero-3-phosphate + phosphate</text>
        <dbReference type="Rhea" id="RHEA:34075"/>
        <dbReference type="ChEBI" id="CHEBI:43474"/>
        <dbReference type="ChEBI" id="CHEBI:57597"/>
        <dbReference type="ChEBI" id="CHEBI:57970"/>
        <dbReference type="ChEBI" id="CHEBI:59918"/>
        <dbReference type="EC" id="2.3.1.275"/>
    </reaction>
</comment>
<comment type="pathway">
    <text evidence="1">Lipid metabolism; phospholipid metabolism.</text>
</comment>
<comment type="subunit">
    <text evidence="1">Probably interacts with PlsX.</text>
</comment>
<comment type="subcellular location">
    <subcellularLocation>
        <location evidence="1">Cell inner membrane</location>
        <topology evidence="1">Multi-pass membrane protein</topology>
    </subcellularLocation>
</comment>
<comment type="similarity">
    <text evidence="1">Belongs to the PlsY family.</text>
</comment>
<evidence type="ECO:0000255" key="1">
    <source>
        <dbReference type="HAMAP-Rule" id="MF_01043"/>
    </source>
</evidence>
<keyword id="KW-0997">Cell inner membrane</keyword>
<keyword id="KW-1003">Cell membrane</keyword>
<keyword id="KW-0444">Lipid biosynthesis</keyword>
<keyword id="KW-0443">Lipid metabolism</keyword>
<keyword id="KW-0472">Membrane</keyword>
<keyword id="KW-0594">Phospholipid biosynthesis</keyword>
<keyword id="KW-1208">Phospholipid metabolism</keyword>
<keyword id="KW-1185">Reference proteome</keyword>
<keyword id="KW-0808">Transferase</keyword>
<keyword id="KW-0812">Transmembrane</keyword>
<keyword id="KW-1133">Transmembrane helix</keyword>
<gene>
    <name evidence="1" type="primary">plsY</name>
    <name type="ordered locus">Bxeno_A3643</name>
    <name type="ORF">Bxe_A0753</name>
</gene>
<protein>
    <recommendedName>
        <fullName evidence="1">Glycerol-3-phosphate acyltransferase</fullName>
    </recommendedName>
    <alternativeName>
        <fullName evidence="1">Acyl-PO4 G3P acyltransferase</fullName>
    </alternativeName>
    <alternativeName>
        <fullName evidence="1">Acyl-phosphate--glycerol-3-phosphate acyltransferase</fullName>
    </alternativeName>
    <alternativeName>
        <fullName evidence="1">G3P acyltransferase</fullName>
        <shortName evidence="1">GPAT</shortName>
        <ecNumber evidence="1">2.3.1.275</ecNumber>
    </alternativeName>
    <alternativeName>
        <fullName evidence="1">Lysophosphatidic acid synthase</fullName>
        <shortName evidence="1">LPA synthase</shortName>
    </alternativeName>
</protein>
<sequence length="214" mass="22448">MQNLIVAVVAYLIGSVSFAVIVSAAMGLDDPRSYGSGNPGATNVLRSGSKKAAILTLIGDAFKGWLPVWFVVHFGARYGLDDTSVAIAAVAVFLGHLYPAFFRFKGGKGVATAAGVLLAINPILGVATLLTWLIVAFFTRYSSLAALAAAVFAPIFDGFLFGPHIIALAIVVMSSLLVWRHRGNIAKLMRGQESRIGDRKKADAAAKPTAGSDV</sequence>